<feature type="chain" id="PRO_0000167728" description="Pyridoxine/pyridoxamine 5'-phosphate oxidase">
    <location>
        <begin position="1"/>
        <end position="213"/>
    </location>
</feature>
<feature type="binding site" evidence="1">
    <location>
        <begin position="60"/>
        <end position="65"/>
    </location>
    <ligand>
        <name>FMN</name>
        <dbReference type="ChEBI" id="CHEBI:58210"/>
    </ligand>
</feature>
<feature type="binding site" evidence="1">
    <location>
        <position position="65"/>
    </location>
    <ligand>
        <name>substrate</name>
    </ligand>
</feature>
<feature type="binding site" evidence="1">
    <location>
        <begin position="75"/>
        <end position="76"/>
    </location>
    <ligand>
        <name>FMN</name>
        <dbReference type="ChEBI" id="CHEBI:58210"/>
    </ligand>
</feature>
<feature type="binding site" evidence="1">
    <location>
        <position position="82"/>
    </location>
    <ligand>
        <name>FMN</name>
        <dbReference type="ChEBI" id="CHEBI:58210"/>
    </ligand>
</feature>
<feature type="binding site" evidence="1">
    <location>
        <position position="104"/>
    </location>
    <ligand>
        <name>FMN</name>
        <dbReference type="ChEBI" id="CHEBI:58210"/>
    </ligand>
</feature>
<feature type="binding site" evidence="1">
    <location>
        <position position="122"/>
    </location>
    <ligand>
        <name>substrate</name>
    </ligand>
</feature>
<feature type="binding site" evidence="1">
    <location>
        <position position="126"/>
    </location>
    <ligand>
        <name>substrate</name>
    </ligand>
</feature>
<feature type="binding site" evidence="1">
    <location>
        <begin position="139"/>
        <end position="140"/>
    </location>
    <ligand>
        <name>FMN</name>
        <dbReference type="ChEBI" id="CHEBI:58210"/>
    </ligand>
</feature>
<feature type="binding site" evidence="1">
    <location>
        <position position="184"/>
    </location>
    <ligand>
        <name>FMN</name>
        <dbReference type="ChEBI" id="CHEBI:58210"/>
    </ligand>
</feature>
<feature type="binding site" evidence="1">
    <location>
        <begin position="190"/>
        <end position="192"/>
    </location>
    <ligand>
        <name>substrate</name>
    </ligand>
</feature>
<feature type="binding site" evidence="1">
    <location>
        <position position="194"/>
    </location>
    <ligand>
        <name>FMN</name>
        <dbReference type="ChEBI" id="CHEBI:58210"/>
    </ligand>
</feature>
<reference key="1">
    <citation type="journal article" date="2006" name="Appl. Environ. Microbiol.">
        <title>Genome sequence of the chemolithoautotrophic nitrite-oxidizing bacterium Nitrobacter winogradskyi Nb-255.</title>
        <authorList>
            <person name="Starkenburg S.R."/>
            <person name="Chain P.S.G."/>
            <person name="Sayavedra-Soto L.A."/>
            <person name="Hauser L."/>
            <person name="Land M.L."/>
            <person name="Larimer F.W."/>
            <person name="Malfatti S.A."/>
            <person name="Klotz M.G."/>
            <person name="Bottomley P.J."/>
            <person name="Arp D.J."/>
            <person name="Hickey W.J."/>
        </authorList>
    </citation>
    <scope>NUCLEOTIDE SEQUENCE [LARGE SCALE GENOMIC DNA]</scope>
    <source>
        <strain>ATCC 25391 / DSM 10237 / CIP 104748 / NCIMB 11846 / Nb-255</strain>
    </source>
</reference>
<gene>
    <name evidence="1" type="primary">pdxH</name>
    <name type="ordered locus">Nwi_0622</name>
</gene>
<accession>Q3SV02</accession>
<dbReference type="EC" id="1.4.3.5" evidence="1"/>
<dbReference type="EMBL" id="CP000115">
    <property type="protein sequence ID" value="ABA03889.1"/>
    <property type="molecule type" value="Genomic_DNA"/>
</dbReference>
<dbReference type="RefSeq" id="WP_011313949.1">
    <property type="nucleotide sequence ID" value="NC_007406.1"/>
</dbReference>
<dbReference type="SMR" id="Q3SV02"/>
<dbReference type="STRING" id="323098.Nwi_0622"/>
<dbReference type="KEGG" id="nwi:Nwi_0622"/>
<dbReference type="eggNOG" id="COG0259">
    <property type="taxonomic scope" value="Bacteria"/>
</dbReference>
<dbReference type="HOGENOM" id="CLU_032263_2_3_5"/>
<dbReference type="OrthoDB" id="9780392at2"/>
<dbReference type="UniPathway" id="UPA01068">
    <property type="reaction ID" value="UER00304"/>
</dbReference>
<dbReference type="UniPathway" id="UPA01068">
    <property type="reaction ID" value="UER00305"/>
</dbReference>
<dbReference type="Proteomes" id="UP000002531">
    <property type="component" value="Chromosome"/>
</dbReference>
<dbReference type="GO" id="GO:0010181">
    <property type="term" value="F:FMN binding"/>
    <property type="evidence" value="ECO:0007669"/>
    <property type="project" value="UniProtKB-UniRule"/>
</dbReference>
<dbReference type="GO" id="GO:0004733">
    <property type="term" value="F:pyridoxamine phosphate oxidase activity"/>
    <property type="evidence" value="ECO:0007669"/>
    <property type="project" value="UniProtKB-UniRule"/>
</dbReference>
<dbReference type="GO" id="GO:0008615">
    <property type="term" value="P:pyridoxine biosynthetic process"/>
    <property type="evidence" value="ECO:0007669"/>
    <property type="project" value="UniProtKB-KW"/>
</dbReference>
<dbReference type="Gene3D" id="2.30.110.10">
    <property type="entry name" value="Electron Transport, Fmn-binding Protein, Chain A"/>
    <property type="match status" value="1"/>
</dbReference>
<dbReference type="HAMAP" id="MF_01629">
    <property type="entry name" value="PdxH"/>
    <property type="match status" value="1"/>
</dbReference>
<dbReference type="InterPro" id="IPR000659">
    <property type="entry name" value="Pyridox_Oxase"/>
</dbReference>
<dbReference type="InterPro" id="IPR019740">
    <property type="entry name" value="Pyridox_Oxase_CS"/>
</dbReference>
<dbReference type="InterPro" id="IPR011576">
    <property type="entry name" value="Pyridox_Oxase_N"/>
</dbReference>
<dbReference type="InterPro" id="IPR019576">
    <property type="entry name" value="Pyridoxamine_oxidase_dimer_C"/>
</dbReference>
<dbReference type="InterPro" id="IPR012349">
    <property type="entry name" value="Split_barrel_FMN-bd"/>
</dbReference>
<dbReference type="NCBIfam" id="TIGR00558">
    <property type="entry name" value="pdxH"/>
    <property type="match status" value="1"/>
</dbReference>
<dbReference type="NCBIfam" id="NF004231">
    <property type="entry name" value="PRK05679.1"/>
    <property type="match status" value="1"/>
</dbReference>
<dbReference type="PANTHER" id="PTHR10851:SF0">
    <property type="entry name" value="PYRIDOXINE-5'-PHOSPHATE OXIDASE"/>
    <property type="match status" value="1"/>
</dbReference>
<dbReference type="PANTHER" id="PTHR10851">
    <property type="entry name" value="PYRIDOXINE-5-PHOSPHATE OXIDASE"/>
    <property type="match status" value="1"/>
</dbReference>
<dbReference type="Pfam" id="PF10590">
    <property type="entry name" value="PNP_phzG_C"/>
    <property type="match status" value="1"/>
</dbReference>
<dbReference type="Pfam" id="PF01243">
    <property type="entry name" value="PNPOx_N"/>
    <property type="match status" value="1"/>
</dbReference>
<dbReference type="PIRSF" id="PIRSF000190">
    <property type="entry name" value="Pyd_amn-ph_oxd"/>
    <property type="match status" value="1"/>
</dbReference>
<dbReference type="SUPFAM" id="SSF50475">
    <property type="entry name" value="FMN-binding split barrel"/>
    <property type="match status" value="1"/>
</dbReference>
<dbReference type="PROSITE" id="PS01064">
    <property type="entry name" value="PYRIDOX_OXIDASE"/>
    <property type="match status" value="1"/>
</dbReference>
<name>PDXH_NITWN</name>
<protein>
    <recommendedName>
        <fullName evidence="1">Pyridoxine/pyridoxamine 5'-phosphate oxidase</fullName>
        <ecNumber evidence="1">1.4.3.5</ecNumber>
    </recommendedName>
    <alternativeName>
        <fullName evidence="1">PNP/PMP oxidase</fullName>
        <shortName evidence="1">PNPOx</shortName>
    </alternativeName>
    <alternativeName>
        <fullName evidence="1">Pyridoxal 5'-phosphate synthase</fullName>
    </alternativeName>
</protein>
<proteinExistence type="inferred from homology"/>
<comment type="function">
    <text evidence="1">Catalyzes the oxidation of either pyridoxine 5'-phosphate (PNP) or pyridoxamine 5'-phosphate (PMP) into pyridoxal 5'-phosphate (PLP).</text>
</comment>
<comment type="catalytic activity">
    <reaction evidence="1">
        <text>pyridoxamine 5'-phosphate + O2 + H2O = pyridoxal 5'-phosphate + H2O2 + NH4(+)</text>
        <dbReference type="Rhea" id="RHEA:15817"/>
        <dbReference type="ChEBI" id="CHEBI:15377"/>
        <dbReference type="ChEBI" id="CHEBI:15379"/>
        <dbReference type="ChEBI" id="CHEBI:16240"/>
        <dbReference type="ChEBI" id="CHEBI:28938"/>
        <dbReference type="ChEBI" id="CHEBI:58451"/>
        <dbReference type="ChEBI" id="CHEBI:597326"/>
        <dbReference type="EC" id="1.4.3.5"/>
    </reaction>
</comment>
<comment type="catalytic activity">
    <reaction evidence="1">
        <text>pyridoxine 5'-phosphate + O2 = pyridoxal 5'-phosphate + H2O2</text>
        <dbReference type="Rhea" id="RHEA:15149"/>
        <dbReference type="ChEBI" id="CHEBI:15379"/>
        <dbReference type="ChEBI" id="CHEBI:16240"/>
        <dbReference type="ChEBI" id="CHEBI:58589"/>
        <dbReference type="ChEBI" id="CHEBI:597326"/>
        <dbReference type="EC" id="1.4.3.5"/>
    </reaction>
</comment>
<comment type="cofactor">
    <cofactor evidence="1">
        <name>FMN</name>
        <dbReference type="ChEBI" id="CHEBI:58210"/>
    </cofactor>
    <text evidence="1">Binds 1 FMN per subunit.</text>
</comment>
<comment type="pathway">
    <text evidence="1">Cofactor metabolism; pyridoxal 5'-phosphate salvage; pyridoxal 5'-phosphate from pyridoxamine 5'-phosphate: step 1/1.</text>
</comment>
<comment type="pathway">
    <text evidence="1">Cofactor metabolism; pyridoxal 5'-phosphate salvage; pyridoxal 5'-phosphate from pyridoxine 5'-phosphate: step 1/1.</text>
</comment>
<comment type="subunit">
    <text evidence="1">Homodimer.</text>
</comment>
<comment type="similarity">
    <text evidence="1">Belongs to the pyridoxamine 5'-phosphate oxidase family.</text>
</comment>
<organism>
    <name type="scientific">Nitrobacter winogradskyi (strain ATCC 25391 / DSM 10237 / CIP 104748 / NCIMB 11846 / Nb-255)</name>
    <dbReference type="NCBI Taxonomy" id="323098"/>
    <lineage>
        <taxon>Bacteria</taxon>
        <taxon>Pseudomonadati</taxon>
        <taxon>Pseudomonadota</taxon>
        <taxon>Alphaproteobacteria</taxon>
        <taxon>Hyphomicrobiales</taxon>
        <taxon>Nitrobacteraceae</taxon>
        <taxon>Nitrobacter</taxon>
    </lineage>
</organism>
<sequence length="213" mass="24054">MNDTTDIKHTSQLTSGDFTEAREPFALFEAWLAEATASEPNDPDAMALATADADGLPDLRMVLMKGFDARGFVFYSHIASAKGRELAANPKAALLFHWKSLRRQVRVRGPVTPVTDAEADAYFATRPRQAQIGAWASRQSRPLESRLAFEQAIAKEAAKYAIGAVPRPPGWSGWRITPLQFEFWHDRPFRLHDRIEFRRSALDVPWTKTRLYP</sequence>
<keyword id="KW-0285">Flavoprotein</keyword>
<keyword id="KW-0288">FMN</keyword>
<keyword id="KW-0560">Oxidoreductase</keyword>
<keyword id="KW-0664">Pyridoxine biosynthesis</keyword>
<keyword id="KW-1185">Reference proteome</keyword>
<evidence type="ECO:0000255" key="1">
    <source>
        <dbReference type="HAMAP-Rule" id="MF_01629"/>
    </source>
</evidence>